<name>LYS4_KLULA</name>
<organism>
    <name type="scientific">Kluyveromyces lactis (strain ATCC 8585 / CBS 2359 / DSM 70799 / NBRC 1267 / NRRL Y-1140 / WM37)</name>
    <name type="common">Yeast</name>
    <name type="synonym">Candida sphaerica</name>
    <dbReference type="NCBI Taxonomy" id="284590"/>
    <lineage>
        <taxon>Eukaryota</taxon>
        <taxon>Fungi</taxon>
        <taxon>Dikarya</taxon>
        <taxon>Ascomycota</taxon>
        <taxon>Saccharomycotina</taxon>
        <taxon>Saccharomycetes</taxon>
        <taxon>Saccharomycetales</taxon>
        <taxon>Saccharomycetaceae</taxon>
        <taxon>Kluyveromyces</taxon>
    </lineage>
</organism>
<comment type="function">
    <text evidence="1">Catalyzes the reversible hydration of cis-homoaconitate to (2R,3S)-homoisocitrate, a step in the alpha-aminoadipate pathway for lysine biosynthesis.</text>
</comment>
<comment type="catalytic activity">
    <reaction>
        <text>(2R,3S)-homoisocitrate = cis-homoaconitate + H2O</text>
        <dbReference type="Rhea" id="RHEA:15485"/>
        <dbReference type="ChEBI" id="CHEBI:15377"/>
        <dbReference type="ChEBI" id="CHEBI:15404"/>
        <dbReference type="ChEBI" id="CHEBI:58174"/>
        <dbReference type="EC" id="4.2.1.36"/>
    </reaction>
</comment>
<comment type="cofactor">
    <cofactor evidence="1">
        <name>[4Fe-4S] cluster</name>
        <dbReference type="ChEBI" id="CHEBI:49883"/>
    </cofactor>
    <text evidence="1">Binds 1 [4Fe-4S] cluster per subunit.</text>
</comment>
<comment type="pathway">
    <text>Amino-acid biosynthesis; L-lysine biosynthesis via AAA pathway; L-alpha-aminoadipate from 2-oxoglutarate: step 3/5.</text>
</comment>
<comment type="subcellular location">
    <subcellularLocation>
        <location evidence="1">Mitochondrion</location>
    </subcellularLocation>
</comment>
<comment type="similarity">
    <text evidence="3">Belongs to the aconitase/IPM isomerase family.</text>
</comment>
<gene>
    <name type="primary">LYS4</name>
    <name type="ordered locus">KLLA0C15125g</name>
</gene>
<protein>
    <recommendedName>
        <fullName>Homoaconitase, mitochondrial</fullName>
        <ecNumber>4.2.1.36</ecNumber>
    </recommendedName>
    <alternativeName>
        <fullName>Homoaconitate hydratase</fullName>
    </alternativeName>
</protein>
<sequence>MFRVQRLRMFSTSRALYAGQNMTEKIVQRHAVGLPEGKTVVSGDYVSIKPAHCMSHDNSWPVALKFMGLGASTIKNPRQVVNTLDHDVQNKSEKNLTKYKNIENFAKKHGIDFYPAGRGIGHQIMIEEGYAFPLTMTVASDSHSNTYGGIGALGTPIVRTDAAAIWATGQTWWQIPPVAQVELKGELPAGISGKDIIVALCGVFNQDQVLNHAIEFTGDSLDKIPIDYRLTIANMTTEWGALSGLFPVDNVLLDFYRNRLTKVGNNHPRINEARINELQAKSDSLQADPDAKYAKKLIIDLSTLTHYVSGPNSVKISSTVDDLSKQDIKVNKAYLVSCTNSRLSDLESAANVVCPSGDINQVHKVAEGVEFYIAAASSEVEAEARATGAWQKLLNAGCLPLPAGCGPCIGLGTGLLEEGQVGISATNRNFKGRMGSKDALAYLASPSVVAASAILGKIGSPAEVLGTKDPNFTGVVATVEDAPATSADGKDVADESGASGSVEILEGFPSEISGELVLCDADNINTDGIYPGKYTYQDDVPKETMAKVCMENYDPDFQTKANPGDILISGFNFGTGSSREQAATAILAKGIKLVVSGSFGNIFFRNSINNALLTLEIPALINMLRDRYKDAPKELTRRTGWFLKWDVSQAKVYVTEGSVNGPIVLEQKVGELGKNLQEIIVKGGLESWVKSQL</sequence>
<feature type="transit peptide" description="Mitochondrion" evidence="2">
    <location>
        <begin position="1"/>
        <end position="17"/>
    </location>
</feature>
<feature type="chain" id="PRO_0000247925" description="Homoaconitase, mitochondrial">
    <location>
        <begin position="18"/>
        <end position="693"/>
    </location>
</feature>
<feature type="binding site" evidence="1">
    <location>
        <position position="338"/>
    </location>
    <ligand>
        <name>[4Fe-4S] cluster</name>
        <dbReference type="ChEBI" id="CHEBI:49883"/>
    </ligand>
</feature>
<feature type="binding site" evidence="1">
    <location>
        <position position="405"/>
    </location>
    <ligand>
        <name>[4Fe-4S] cluster</name>
        <dbReference type="ChEBI" id="CHEBI:49883"/>
    </ligand>
</feature>
<feature type="binding site" evidence="1">
    <location>
        <position position="408"/>
    </location>
    <ligand>
        <name>[4Fe-4S] cluster</name>
        <dbReference type="ChEBI" id="CHEBI:49883"/>
    </ligand>
</feature>
<evidence type="ECO:0000250" key="1"/>
<evidence type="ECO:0000255" key="2"/>
<evidence type="ECO:0000305" key="3"/>
<keyword id="KW-0028">Amino-acid biosynthesis</keyword>
<keyword id="KW-0408">Iron</keyword>
<keyword id="KW-0411">Iron-sulfur</keyword>
<keyword id="KW-0456">Lyase</keyword>
<keyword id="KW-0457">Lysine biosynthesis</keyword>
<keyword id="KW-0479">Metal-binding</keyword>
<keyword id="KW-0496">Mitochondrion</keyword>
<keyword id="KW-1185">Reference proteome</keyword>
<keyword id="KW-0809">Transit peptide</keyword>
<accession>Q6CT61</accession>
<dbReference type="EC" id="4.2.1.36"/>
<dbReference type="EMBL" id="CR382123">
    <property type="protein sequence ID" value="CAH01729.1"/>
    <property type="molecule type" value="Genomic_DNA"/>
</dbReference>
<dbReference type="RefSeq" id="XP_452878.1">
    <property type="nucleotide sequence ID" value="XM_452878.1"/>
</dbReference>
<dbReference type="SMR" id="Q6CT61"/>
<dbReference type="FunCoup" id="Q6CT61">
    <property type="interactions" value="157"/>
</dbReference>
<dbReference type="STRING" id="284590.Q6CT61"/>
<dbReference type="PaxDb" id="284590-Q6CT61"/>
<dbReference type="KEGG" id="kla:KLLA0_C15125g"/>
<dbReference type="eggNOG" id="KOG0453">
    <property type="taxonomic scope" value="Eukaryota"/>
</dbReference>
<dbReference type="HOGENOM" id="CLU_006714_3_1_1"/>
<dbReference type="InParanoid" id="Q6CT61"/>
<dbReference type="OMA" id="LCDADNI"/>
<dbReference type="UniPathway" id="UPA00033">
    <property type="reaction ID" value="UER01027"/>
</dbReference>
<dbReference type="Proteomes" id="UP000000598">
    <property type="component" value="Chromosome C"/>
</dbReference>
<dbReference type="GO" id="GO:0005739">
    <property type="term" value="C:mitochondrion"/>
    <property type="evidence" value="ECO:0007669"/>
    <property type="project" value="UniProtKB-SubCell"/>
</dbReference>
<dbReference type="GO" id="GO:0051539">
    <property type="term" value="F:4 iron, 4 sulfur cluster binding"/>
    <property type="evidence" value="ECO:0007669"/>
    <property type="project" value="InterPro"/>
</dbReference>
<dbReference type="GO" id="GO:0004409">
    <property type="term" value="F:homoaconitate hydratase activity"/>
    <property type="evidence" value="ECO:0007669"/>
    <property type="project" value="UniProtKB-EC"/>
</dbReference>
<dbReference type="GO" id="GO:0046872">
    <property type="term" value="F:metal ion binding"/>
    <property type="evidence" value="ECO:0007669"/>
    <property type="project" value="UniProtKB-KW"/>
</dbReference>
<dbReference type="GO" id="GO:0019878">
    <property type="term" value="P:lysine biosynthetic process via aminoadipic acid"/>
    <property type="evidence" value="ECO:0007669"/>
    <property type="project" value="UniProtKB-UniPathway"/>
</dbReference>
<dbReference type="CDD" id="cd01582">
    <property type="entry name" value="Homoaconitase"/>
    <property type="match status" value="1"/>
</dbReference>
<dbReference type="CDD" id="cd01674">
    <property type="entry name" value="Homoaconitase_Swivel"/>
    <property type="match status" value="1"/>
</dbReference>
<dbReference type="FunFam" id="3.30.499.10:FF:000013">
    <property type="entry name" value="Homoaconitase, mitochondrial"/>
    <property type="match status" value="1"/>
</dbReference>
<dbReference type="FunFam" id="3.30.499.10:FF:000016">
    <property type="entry name" value="Homoaconitase, mitochondrial"/>
    <property type="match status" value="1"/>
</dbReference>
<dbReference type="Gene3D" id="3.30.499.10">
    <property type="entry name" value="Aconitase, domain 3"/>
    <property type="match status" value="2"/>
</dbReference>
<dbReference type="Gene3D" id="3.20.19.10">
    <property type="entry name" value="Aconitase, domain 4"/>
    <property type="match status" value="1"/>
</dbReference>
<dbReference type="InterPro" id="IPR015931">
    <property type="entry name" value="Acnase/IPM_dHydase_lsu_aba_1/3"/>
</dbReference>
<dbReference type="InterPro" id="IPR001030">
    <property type="entry name" value="Acoase/IPM_deHydtase_lsu_aba"/>
</dbReference>
<dbReference type="InterPro" id="IPR015928">
    <property type="entry name" value="Aconitase/3IPM_dehydase_swvl"/>
</dbReference>
<dbReference type="InterPro" id="IPR018136">
    <property type="entry name" value="Aconitase_4Fe-4S_BS"/>
</dbReference>
<dbReference type="InterPro" id="IPR036008">
    <property type="entry name" value="Aconitase_4Fe-4S_dom"/>
</dbReference>
<dbReference type="InterPro" id="IPR000573">
    <property type="entry name" value="AconitaseA/IPMdHydase_ssu_swvl"/>
</dbReference>
<dbReference type="InterPro" id="IPR004418">
    <property type="entry name" value="Homoaconitase_mito"/>
</dbReference>
<dbReference type="InterPro" id="IPR039386">
    <property type="entry name" value="Homoaconitase_swivel"/>
</dbReference>
<dbReference type="InterPro" id="IPR050067">
    <property type="entry name" value="IPM_dehydratase_rel_enz"/>
</dbReference>
<dbReference type="NCBIfam" id="TIGR00139">
    <property type="entry name" value="h_aconitase"/>
    <property type="match status" value="1"/>
</dbReference>
<dbReference type="PANTHER" id="PTHR43822:SF2">
    <property type="entry name" value="HOMOACONITASE, MITOCHONDRIAL"/>
    <property type="match status" value="1"/>
</dbReference>
<dbReference type="PANTHER" id="PTHR43822">
    <property type="entry name" value="HOMOACONITASE, MITOCHONDRIAL-RELATED"/>
    <property type="match status" value="1"/>
</dbReference>
<dbReference type="Pfam" id="PF00330">
    <property type="entry name" value="Aconitase"/>
    <property type="match status" value="1"/>
</dbReference>
<dbReference type="Pfam" id="PF00694">
    <property type="entry name" value="Aconitase_C"/>
    <property type="match status" value="1"/>
</dbReference>
<dbReference type="PRINTS" id="PR00415">
    <property type="entry name" value="ACONITASE"/>
</dbReference>
<dbReference type="SUPFAM" id="SSF53732">
    <property type="entry name" value="Aconitase iron-sulfur domain"/>
    <property type="match status" value="1"/>
</dbReference>
<dbReference type="SUPFAM" id="SSF52016">
    <property type="entry name" value="LeuD/IlvD-like"/>
    <property type="match status" value="1"/>
</dbReference>
<dbReference type="PROSITE" id="PS00450">
    <property type="entry name" value="ACONITASE_1"/>
    <property type="match status" value="1"/>
</dbReference>
<dbReference type="PROSITE" id="PS01244">
    <property type="entry name" value="ACONITASE_2"/>
    <property type="match status" value="1"/>
</dbReference>
<proteinExistence type="inferred from homology"/>
<reference key="1">
    <citation type="journal article" date="2004" name="Nature">
        <title>Genome evolution in yeasts.</title>
        <authorList>
            <person name="Dujon B."/>
            <person name="Sherman D."/>
            <person name="Fischer G."/>
            <person name="Durrens P."/>
            <person name="Casaregola S."/>
            <person name="Lafontaine I."/>
            <person name="de Montigny J."/>
            <person name="Marck C."/>
            <person name="Neuveglise C."/>
            <person name="Talla E."/>
            <person name="Goffard N."/>
            <person name="Frangeul L."/>
            <person name="Aigle M."/>
            <person name="Anthouard V."/>
            <person name="Babour A."/>
            <person name="Barbe V."/>
            <person name="Barnay S."/>
            <person name="Blanchin S."/>
            <person name="Beckerich J.-M."/>
            <person name="Beyne E."/>
            <person name="Bleykasten C."/>
            <person name="Boisrame A."/>
            <person name="Boyer J."/>
            <person name="Cattolico L."/>
            <person name="Confanioleri F."/>
            <person name="de Daruvar A."/>
            <person name="Despons L."/>
            <person name="Fabre E."/>
            <person name="Fairhead C."/>
            <person name="Ferry-Dumazet H."/>
            <person name="Groppi A."/>
            <person name="Hantraye F."/>
            <person name="Hennequin C."/>
            <person name="Jauniaux N."/>
            <person name="Joyet P."/>
            <person name="Kachouri R."/>
            <person name="Kerrest A."/>
            <person name="Koszul R."/>
            <person name="Lemaire M."/>
            <person name="Lesur I."/>
            <person name="Ma L."/>
            <person name="Muller H."/>
            <person name="Nicaud J.-M."/>
            <person name="Nikolski M."/>
            <person name="Oztas S."/>
            <person name="Ozier-Kalogeropoulos O."/>
            <person name="Pellenz S."/>
            <person name="Potier S."/>
            <person name="Richard G.-F."/>
            <person name="Straub M.-L."/>
            <person name="Suleau A."/>
            <person name="Swennen D."/>
            <person name="Tekaia F."/>
            <person name="Wesolowski-Louvel M."/>
            <person name="Westhof E."/>
            <person name="Wirth B."/>
            <person name="Zeniou-Meyer M."/>
            <person name="Zivanovic Y."/>
            <person name="Bolotin-Fukuhara M."/>
            <person name="Thierry A."/>
            <person name="Bouchier C."/>
            <person name="Caudron B."/>
            <person name="Scarpelli C."/>
            <person name="Gaillardin C."/>
            <person name="Weissenbach J."/>
            <person name="Wincker P."/>
            <person name="Souciet J.-L."/>
        </authorList>
    </citation>
    <scope>NUCLEOTIDE SEQUENCE [LARGE SCALE GENOMIC DNA]</scope>
    <source>
        <strain>ATCC 8585 / CBS 2359 / DSM 70799 / NBRC 1267 / NRRL Y-1140 / WM37</strain>
    </source>
</reference>